<feature type="chain" id="PRO_0000389730" description="Acetyl-coenzyme A carboxylase carboxyl transferase subunit beta">
    <location>
        <begin position="1"/>
        <end position="292"/>
    </location>
</feature>
<feature type="domain" description="CoA carboxyltransferase N-terminal" evidence="2">
    <location>
        <begin position="36"/>
        <end position="292"/>
    </location>
</feature>
<feature type="zinc finger region" description="C4-type" evidence="1">
    <location>
        <begin position="40"/>
        <end position="62"/>
    </location>
</feature>
<feature type="binding site" evidence="1">
    <location>
        <position position="40"/>
    </location>
    <ligand>
        <name>Zn(2+)</name>
        <dbReference type="ChEBI" id="CHEBI:29105"/>
    </ligand>
</feature>
<feature type="binding site" evidence="1">
    <location>
        <position position="43"/>
    </location>
    <ligand>
        <name>Zn(2+)</name>
        <dbReference type="ChEBI" id="CHEBI:29105"/>
    </ligand>
</feature>
<feature type="binding site" evidence="1">
    <location>
        <position position="59"/>
    </location>
    <ligand>
        <name>Zn(2+)</name>
        <dbReference type="ChEBI" id="CHEBI:29105"/>
    </ligand>
</feature>
<feature type="binding site" evidence="1">
    <location>
        <position position="62"/>
    </location>
    <ligand>
        <name>Zn(2+)</name>
        <dbReference type="ChEBI" id="CHEBI:29105"/>
    </ligand>
</feature>
<name>ACCD_CLOPE</name>
<proteinExistence type="inferred from homology"/>
<dbReference type="EC" id="2.1.3.15" evidence="1"/>
<dbReference type="EMBL" id="BA000016">
    <property type="protein sequence ID" value="BAB80781.1"/>
    <property type="status" value="ALT_SEQ"/>
    <property type="molecule type" value="Genomic_DNA"/>
</dbReference>
<dbReference type="SMR" id="Q8XLG6"/>
<dbReference type="STRING" id="195102.gene:10490338"/>
<dbReference type="KEGG" id="cpe:CPE1075"/>
<dbReference type="HOGENOM" id="CLU_015486_1_1_9"/>
<dbReference type="UniPathway" id="UPA00655">
    <property type="reaction ID" value="UER00711"/>
</dbReference>
<dbReference type="Proteomes" id="UP000000818">
    <property type="component" value="Chromosome"/>
</dbReference>
<dbReference type="GO" id="GO:0009317">
    <property type="term" value="C:acetyl-CoA carboxylase complex"/>
    <property type="evidence" value="ECO:0007669"/>
    <property type="project" value="InterPro"/>
</dbReference>
<dbReference type="GO" id="GO:0003989">
    <property type="term" value="F:acetyl-CoA carboxylase activity"/>
    <property type="evidence" value="ECO:0007669"/>
    <property type="project" value="InterPro"/>
</dbReference>
<dbReference type="GO" id="GO:0005524">
    <property type="term" value="F:ATP binding"/>
    <property type="evidence" value="ECO:0007669"/>
    <property type="project" value="UniProtKB-KW"/>
</dbReference>
<dbReference type="GO" id="GO:0016743">
    <property type="term" value="F:carboxyl- or carbamoyltransferase activity"/>
    <property type="evidence" value="ECO:0007669"/>
    <property type="project" value="UniProtKB-UniRule"/>
</dbReference>
<dbReference type="GO" id="GO:0008270">
    <property type="term" value="F:zinc ion binding"/>
    <property type="evidence" value="ECO:0007669"/>
    <property type="project" value="UniProtKB-UniRule"/>
</dbReference>
<dbReference type="GO" id="GO:0006633">
    <property type="term" value="P:fatty acid biosynthetic process"/>
    <property type="evidence" value="ECO:0007669"/>
    <property type="project" value="UniProtKB-KW"/>
</dbReference>
<dbReference type="GO" id="GO:2001295">
    <property type="term" value="P:malonyl-CoA biosynthetic process"/>
    <property type="evidence" value="ECO:0007669"/>
    <property type="project" value="UniProtKB-UniRule"/>
</dbReference>
<dbReference type="Gene3D" id="3.90.226.10">
    <property type="entry name" value="2-enoyl-CoA Hydratase, Chain A, domain 1"/>
    <property type="match status" value="1"/>
</dbReference>
<dbReference type="HAMAP" id="MF_01395">
    <property type="entry name" value="AcetylCoA_CT_beta"/>
    <property type="match status" value="1"/>
</dbReference>
<dbReference type="InterPro" id="IPR034733">
    <property type="entry name" value="AcCoA_carboxyl_beta"/>
</dbReference>
<dbReference type="InterPro" id="IPR000438">
    <property type="entry name" value="Acetyl_CoA_COase_Trfase_b_su"/>
</dbReference>
<dbReference type="InterPro" id="IPR029045">
    <property type="entry name" value="ClpP/crotonase-like_dom_sf"/>
</dbReference>
<dbReference type="InterPro" id="IPR011762">
    <property type="entry name" value="COA_CT_N"/>
</dbReference>
<dbReference type="InterPro" id="IPR041010">
    <property type="entry name" value="Znf-ACC"/>
</dbReference>
<dbReference type="NCBIfam" id="TIGR00515">
    <property type="entry name" value="accD"/>
    <property type="match status" value="1"/>
</dbReference>
<dbReference type="PANTHER" id="PTHR42995">
    <property type="entry name" value="ACETYL-COENZYME A CARBOXYLASE CARBOXYL TRANSFERASE SUBUNIT BETA, CHLOROPLASTIC"/>
    <property type="match status" value="1"/>
</dbReference>
<dbReference type="PANTHER" id="PTHR42995:SF5">
    <property type="entry name" value="ACETYL-COENZYME A CARBOXYLASE CARBOXYL TRANSFERASE SUBUNIT BETA, CHLOROPLASTIC"/>
    <property type="match status" value="1"/>
</dbReference>
<dbReference type="Pfam" id="PF01039">
    <property type="entry name" value="Carboxyl_trans"/>
    <property type="match status" value="1"/>
</dbReference>
<dbReference type="Pfam" id="PF17848">
    <property type="entry name" value="Zn_ribbon_ACC"/>
    <property type="match status" value="1"/>
</dbReference>
<dbReference type="PRINTS" id="PR01070">
    <property type="entry name" value="ACCCTRFRASEB"/>
</dbReference>
<dbReference type="SUPFAM" id="SSF52096">
    <property type="entry name" value="ClpP/crotonase"/>
    <property type="match status" value="1"/>
</dbReference>
<dbReference type="PROSITE" id="PS50980">
    <property type="entry name" value="COA_CT_NTER"/>
    <property type="match status" value="1"/>
</dbReference>
<organism>
    <name type="scientific">Clostridium perfringens (strain 13 / Type A)</name>
    <dbReference type="NCBI Taxonomy" id="195102"/>
    <lineage>
        <taxon>Bacteria</taxon>
        <taxon>Bacillati</taxon>
        <taxon>Bacillota</taxon>
        <taxon>Clostridia</taxon>
        <taxon>Eubacteriales</taxon>
        <taxon>Clostridiaceae</taxon>
        <taxon>Clostridium</taxon>
    </lineage>
</organism>
<comment type="function">
    <text evidence="1">Component of the acetyl coenzyme A carboxylase (ACC) complex. Biotin carboxylase (BC) catalyzes the carboxylation of biotin on its carrier protein (BCCP) and then the CO(2) group is transferred by the transcarboxylase to acetyl-CoA to form malonyl-CoA.</text>
</comment>
<comment type="catalytic activity">
    <reaction evidence="1">
        <text>N(6)-carboxybiotinyl-L-lysyl-[protein] + acetyl-CoA = N(6)-biotinyl-L-lysyl-[protein] + malonyl-CoA</text>
        <dbReference type="Rhea" id="RHEA:54728"/>
        <dbReference type="Rhea" id="RHEA-COMP:10505"/>
        <dbReference type="Rhea" id="RHEA-COMP:10506"/>
        <dbReference type="ChEBI" id="CHEBI:57288"/>
        <dbReference type="ChEBI" id="CHEBI:57384"/>
        <dbReference type="ChEBI" id="CHEBI:83144"/>
        <dbReference type="ChEBI" id="CHEBI:83145"/>
        <dbReference type="EC" id="2.1.3.15"/>
    </reaction>
</comment>
<comment type="cofactor">
    <cofactor evidence="1">
        <name>Zn(2+)</name>
        <dbReference type="ChEBI" id="CHEBI:29105"/>
    </cofactor>
    <text evidence="1">Binds 1 zinc ion per subunit.</text>
</comment>
<comment type="pathway">
    <text evidence="1">Lipid metabolism; malonyl-CoA biosynthesis; malonyl-CoA from acetyl-CoA: step 1/1.</text>
</comment>
<comment type="subunit">
    <text evidence="1">Acetyl-CoA carboxylase is a heterohexamer composed of biotin carboxyl carrier protein (AccB), biotin carboxylase (AccC) and two subunits each of ACCase subunit alpha (AccA) and ACCase subunit beta (AccD).</text>
</comment>
<comment type="subcellular location">
    <subcellularLocation>
        <location evidence="1">Cytoplasm</location>
    </subcellularLocation>
</comment>
<comment type="similarity">
    <text evidence="1">Belongs to the AccD/PCCB family.</text>
</comment>
<comment type="sequence caution" evidence="3">
    <conflict type="erroneous initiation">
        <sequence resource="EMBL-CDS" id="BAB80781"/>
    </conflict>
    <text>Truncated N-terminus.</text>
</comment>
<comment type="sequence caution" evidence="3">
    <conflict type="frameshift">
        <sequence resource="EMBL-CDS" id="BAB80781"/>
    </conflict>
</comment>
<protein>
    <recommendedName>
        <fullName evidence="1">Acetyl-coenzyme A carboxylase carboxyl transferase subunit beta</fullName>
        <shortName evidence="1">ACCase subunit beta</shortName>
        <shortName evidence="1">Acetyl-CoA carboxylase carboxyltransferase subunit beta</shortName>
        <ecNumber evidence="1">2.1.3.15</ecNumber>
    </recommendedName>
</protein>
<gene>
    <name evidence="1" type="primary">accD</name>
    <name type="ordered locus">CPE1075</name>
</gene>
<accession>Q8XLG6</accession>
<reference key="1">
    <citation type="journal article" date="2002" name="Proc. Natl. Acad. Sci. U.S.A.">
        <title>Complete genome sequence of Clostridium perfringens, an anaerobic flesh-eater.</title>
        <authorList>
            <person name="Shimizu T."/>
            <person name="Ohtani K."/>
            <person name="Hirakawa H."/>
            <person name="Ohshima K."/>
            <person name="Yamashita A."/>
            <person name="Shiba T."/>
            <person name="Ogasawara N."/>
            <person name="Hattori M."/>
            <person name="Kuhara S."/>
            <person name="Hayashi H."/>
        </authorList>
    </citation>
    <scope>NUCLEOTIDE SEQUENCE [LARGE SCALE GENOMIC DNA]</scope>
    <source>
        <strain>13 / Type A</strain>
    </source>
</reference>
<sequence>MIKNLLNKRKYITVSSVELNDTELSEDEKPNIPSGMWSKCEKCAKILYTEDLRENFNVCPNCGHHFKLGAYERIKYLTDENTFVEFDKKMIGRNPLDFNGYEEKIKGYQKKSHVIEGVVTGEAYIAQRKVVLCVMDSNFMMGSMGTAVGEKITRAIEYATKNRLPLIIFTCSGGARMQEGIYSLMQMAKVSGAIYRHGRENLLYITVLTNPTTGGVTASFAMEGDIILSEPGCLVGFAGRRVIEGTINEKLPDDFQTAEFLLEKGFIDKIVQRKDLKQVITSLLRMHEVDYE</sequence>
<keyword id="KW-0067">ATP-binding</keyword>
<keyword id="KW-0963">Cytoplasm</keyword>
<keyword id="KW-0275">Fatty acid biosynthesis</keyword>
<keyword id="KW-0276">Fatty acid metabolism</keyword>
<keyword id="KW-0444">Lipid biosynthesis</keyword>
<keyword id="KW-0443">Lipid metabolism</keyword>
<keyword id="KW-0479">Metal-binding</keyword>
<keyword id="KW-0547">Nucleotide-binding</keyword>
<keyword id="KW-1185">Reference proteome</keyword>
<keyword id="KW-0808">Transferase</keyword>
<keyword id="KW-0862">Zinc</keyword>
<keyword id="KW-0863">Zinc-finger</keyword>
<evidence type="ECO:0000255" key="1">
    <source>
        <dbReference type="HAMAP-Rule" id="MF_01395"/>
    </source>
</evidence>
<evidence type="ECO:0000255" key="2">
    <source>
        <dbReference type="PROSITE-ProRule" id="PRU01136"/>
    </source>
</evidence>
<evidence type="ECO:0000305" key="3"/>